<protein>
    <recommendedName>
        <fullName evidence="1">Thymidine kinase</fullName>
        <ecNumber evidence="1">2.7.1.21</ecNumber>
    </recommendedName>
</protein>
<gene>
    <name evidence="1" type="primary">tdk</name>
    <name type="ordered locus">DICTH_0645</name>
</gene>
<proteinExistence type="inferred from homology"/>
<evidence type="ECO:0000255" key="1">
    <source>
        <dbReference type="HAMAP-Rule" id="MF_00124"/>
    </source>
</evidence>
<keyword id="KW-0067">ATP-binding</keyword>
<keyword id="KW-0963">Cytoplasm</keyword>
<keyword id="KW-0237">DNA synthesis</keyword>
<keyword id="KW-0418">Kinase</keyword>
<keyword id="KW-0479">Metal-binding</keyword>
<keyword id="KW-0547">Nucleotide-binding</keyword>
<keyword id="KW-0808">Transferase</keyword>
<keyword id="KW-0862">Zinc</keyword>
<feature type="chain" id="PRO_1000095432" description="Thymidine kinase">
    <location>
        <begin position="1"/>
        <end position="198"/>
    </location>
</feature>
<feature type="active site" description="Proton acceptor" evidence="1">
    <location>
        <position position="90"/>
    </location>
</feature>
<feature type="binding site" evidence="1">
    <location>
        <begin position="16"/>
        <end position="23"/>
    </location>
    <ligand>
        <name>ATP</name>
        <dbReference type="ChEBI" id="CHEBI:30616"/>
    </ligand>
</feature>
<feature type="binding site" evidence="1">
    <location>
        <begin position="89"/>
        <end position="92"/>
    </location>
    <ligand>
        <name>ATP</name>
        <dbReference type="ChEBI" id="CHEBI:30616"/>
    </ligand>
</feature>
<feature type="binding site" evidence="1">
    <location>
        <position position="146"/>
    </location>
    <ligand>
        <name>Zn(2+)</name>
        <dbReference type="ChEBI" id="CHEBI:29105"/>
    </ligand>
</feature>
<feature type="binding site" evidence="1">
    <location>
        <position position="149"/>
    </location>
    <ligand>
        <name>Zn(2+)</name>
        <dbReference type="ChEBI" id="CHEBI:29105"/>
    </ligand>
</feature>
<feature type="binding site" evidence="1">
    <location>
        <position position="184"/>
    </location>
    <ligand>
        <name>Zn(2+)</name>
        <dbReference type="ChEBI" id="CHEBI:29105"/>
    </ligand>
</feature>
<feature type="binding site" evidence="1">
    <location>
        <position position="187"/>
    </location>
    <ligand>
        <name>Zn(2+)</name>
        <dbReference type="ChEBI" id="CHEBI:29105"/>
    </ligand>
</feature>
<name>KITH_DICT6</name>
<reference key="1">
    <citation type="journal article" date="2014" name="Genome Announc.">
        <title>Complete Genome Sequence of the Extreme Thermophile Dictyoglomus thermophilum H-6-12.</title>
        <authorList>
            <person name="Coil D.A."/>
            <person name="Badger J.H."/>
            <person name="Forberger H.C."/>
            <person name="Riggs F."/>
            <person name="Madupu R."/>
            <person name="Fedorova N."/>
            <person name="Ward N."/>
            <person name="Robb F.T."/>
            <person name="Eisen J.A."/>
        </authorList>
    </citation>
    <scope>NUCLEOTIDE SEQUENCE [LARGE SCALE GENOMIC DNA]</scope>
    <source>
        <strain>ATCC 35947 / DSM 3960 / H-6-12</strain>
    </source>
</reference>
<comment type="catalytic activity">
    <reaction evidence="1">
        <text>thymidine + ATP = dTMP + ADP + H(+)</text>
        <dbReference type="Rhea" id="RHEA:19129"/>
        <dbReference type="ChEBI" id="CHEBI:15378"/>
        <dbReference type="ChEBI" id="CHEBI:17748"/>
        <dbReference type="ChEBI" id="CHEBI:30616"/>
        <dbReference type="ChEBI" id="CHEBI:63528"/>
        <dbReference type="ChEBI" id="CHEBI:456216"/>
        <dbReference type="EC" id="2.7.1.21"/>
    </reaction>
</comment>
<comment type="subunit">
    <text evidence="1">Homotetramer.</text>
</comment>
<comment type="subcellular location">
    <subcellularLocation>
        <location evidence="1">Cytoplasm</location>
    </subcellularLocation>
</comment>
<comment type="similarity">
    <text evidence="1">Belongs to the thymidine kinase family.</text>
</comment>
<dbReference type="EC" id="2.7.1.21" evidence="1"/>
<dbReference type="EMBL" id="CP001146">
    <property type="protein sequence ID" value="ACI19253.1"/>
    <property type="molecule type" value="Genomic_DNA"/>
</dbReference>
<dbReference type="RefSeq" id="WP_012547885.1">
    <property type="nucleotide sequence ID" value="NC_011297.1"/>
</dbReference>
<dbReference type="SMR" id="B5YDB0"/>
<dbReference type="STRING" id="309799.DICTH_0645"/>
<dbReference type="PaxDb" id="309799-DICTH_0645"/>
<dbReference type="KEGG" id="dth:DICTH_0645"/>
<dbReference type="eggNOG" id="COG1435">
    <property type="taxonomic scope" value="Bacteria"/>
</dbReference>
<dbReference type="HOGENOM" id="CLU_064400_3_0_0"/>
<dbReference type="OrthoDB" id="9781579at2"/>
<dbReference type="Proteomes" id="UP000001733">
    <property type="component" value="Chromosome"/>
</dbReference>
<dbReference type="GO" id="GO:0005829">
    <property type="term" value="C:cytosol"/>
    <property type="evidence" value="ECO:0007669"/>
    <property type="project" value="TreeGrafter"/>
</dbReference>
<dbReference type="GO" id="GO:0005524">
    <property type="term" value="F:ATP binding"/>
    <property type="evidence" value="ECO:0007669"/>
    <property type="project" value="UniProtKB-UniRule"/>
</dbReference>
<dbReference type="GO" id="GO:0004797">
    <property type="term" value="F:thymidine kinase activity"/>
    <property type="evidence" value="ECO:0007669"/>
    <property type="project" value="UniProtKB-UniRule"/>
</dbReference>
<dbReference type="GO" id="GO:0008270">
    <property type="term" value="F:zinc ion binding"/>
    <property type="evidence" value="ECO:0007669"/>
    <property type="project" value="UniProtKB-UniRule"/>
</dbReference>
<dbReference type="GO" id="GO:0071897">
    <property type="term" value="P:DNA biosynthetic process"/>
    <property type="evidence" value="ECO:0007669"/>
    <property type="project" value="UniProtKB-KW"/>
</dbReference>
<dbReference type="GO" id="GO:0046104">
    <property type="term" value="P:thymidine metabolic process"/>
    <property type="evidence" value="ECO:0007669"/>
    <property type="project" value="TreeGrafter"/>
</dbReference>
<dbReference type="FunFam" id="3.30.60.20:FF:000026">
    <property type="entry name" value="Thymidine kinase"/>
    <property type="match status" value="1"/>
</dbReference>
<dbReference type="FunFam" id="3.40.50.300:FF:000384">
    <property type="entry name" value="Thymidine kinase"/>
    <property type="match status" value="1"/>
</dbReference>
<dbReference type="Gene3D" id="3.30.60.20">
    <property type="match status" value="1"/>
</dbReference>
<dbReference type="Gene3D" id="3.40.50.300">
    <property type="entry name" value="P-loop containing nucleotide triphosphate hydrolases"/>
    <property type="match status" value="1"/>
</dbReference>
<dbReference type="HAMAP" id="MF_00124">
    <property type="entry name" value="Thymidine_kinase"/>
    <property type="match status" value="1"/>
</dbReference>
<dbReference type="InterPro" id="IPR027417">
    <property type="entry name" value="P-loop_NTPase"/>
</dbReference>
<dbReference type="InterPro" id="IPR001267">
    <property type="entry name" value="Thymidine_kinase"/>
</dbReference>
<dbReference type="InterPro" id="IPR020633">
    <property type="entry name" value="Thymidine_kinase_CS"/>
</dbReference>
<dbReference type="NCBIfam" id="NF003296">
    <property type="entry name" value="PRK04296.1-1"/>
    <property type="match status" value="1"/>
</dbReference>
<dbReference type="PANTHER" id="PTHR11441">
    <property type="entry name" value="THYMIDINE KINASE"/>
    <property type="match status" value="1"/>
</dbReference>
<dbReference type="PANTHER" id="PTHR11441:SF0">
    <property type="entry name" value="THYMIDINE KINASE, CYTOSOLIC"/>
    <property type="match status" value="1"/>
</dbReference>
<dbReference type="Pfam" id="PF00265">
    <property type="entry name" value="TK"/>
    <property type="match status" value="1"/>
</dbReference>
<dbReference type="PIRSF" id="PIRSF035805">
    <property type="entry name" value="TK_cell"/>
    <property type="match status" value="1"/>
</dbReference>
<dbReference type="SUPFAM" id="SSF57716">
    <property type="entry name" value="Glucocorticoid receptor-like (DNA-binding domain)"/>
    <property type="match status" value="1"/>
</dbReference>
<dbReference type="SUPFAM" id="SSF52540">
    <property type="entry name" value="P-loop containing nucleoside triphosphate hydrolases"/>
    <property type="match status" value="1"/>
</dbReference>
<dbReference type="PROSITE" id="PS00603">
    <property type="entry name" value="TK_CELLULAR_TYPE"/>
    <property type="match status" value="1"/>
</dbReference>
<organism>
    <name type="scientific">Dictyoglomus thermophilum (strain ATCC 35947 / DSM 3960 / H-6-12)</name>
    <dbReference type="NCBI Taxonomy" id="309799"/>
    <lineage>
        <taxon>Bacteria</taxon>
        <taxon>Pseudomonadati</taxon>
        <taxon>Dictyoglomota</taxon>
        <taxon>Dictyoglomia</taxon>
        <taxon>Dictyoglomales</taxon>
        <taxon>Dictyoglomaceae</taxon>
        <taxon>Dictyoglomus</taxon>
    </lineage>
</organism>
<sequence length="198" mass="22357">MEILNGPSGWIEVICGGMYSGKSEELIRRVRRAQIAKQKVQVFKHSLDIRYDKDYVASHTGLKIEAIPVSSSADIERLVEDDTQVVAIEEGQFFDMGIVKVCQRLADKGKRVIVAGLDQDFRGEPFGPMPYLMAVAEYVDKLHAICMKCGNVASRTQRIIDGKPAYYDDPIILVGAFETYEARCRNCHIVLRRDENEK</sequence>
<accession>B5YDB0</accession>